<dbReference type="EC" id="4.2.1.96" evidence="1"/>
<dbReference type="EMBL" id="CP000580">
    <property type="protein sequence ID" value="ABO00045.1"/>
    <property type="molecule type" value="Genomic_DNA"/>
</dbReference>
<dbReference type="SMR" id="A3Q4G7"/>
<dbReference type="KEGG" id="mjl:Mjls_4273"/>
<dbReference type="HOGENOM" id="CLU_081974_4_3_11"/>
<dbReference type="BioCyc" id="MSP164757:G1G8C-4314-MONOMER"/>
<dbReference type="GO" id="GO:0008124">
    <property type="term" value="F:4-alpha-hydroxytetrahydrobiopterin dehydratase activity"/>
    <property type="evidence" value="ECO:0007669"/>
    <property type="project" value="UniProtKB-UniRule"/>
</dbReference>
<dbReference type="GO" id="GO:0006729">
    <property type="term" value="P:tetrahydrobiopterin biosynthetic process"/>
    <property type="evidence" value="ECO:0007669"/>
    <property type="project" value="InterPro"/>
</dbReference>
<dbReference type="CDD" id="cd00488">
    <property type="entry name" value="PCD_DCoH"/>
    <property type="match status" value="1"/>
</dbReference>
<dbReference type="Gene3D" id="3.30.1360.20">
    <property type="entry name" value="Transcriptional coactivator/pterin dehydratase"/>
    <property type="match status" value="1"/>
</dbReference>
<dbReference type="HAMAP" id="MF_00434">
    <property type="entry name" value="Pterin_4_alpha"/>
    <property type="match status" value="1"/>
</dbReference>
<dbReference type="InterPro" id="IPR036428">
    <property type="entry name" value="PCD_sf"/>
</dbReference>
<dbReference type="InterPro" id="IPR001533">
    <property type="entry name" value="Pterin_deHydtase"/>
</dbReference>
<dbReference type="NCBIfam" id="NF002017">
    <property type="entry name" value="PRK00823.1-2"/>
    <property type="match status" value="1"/>
</dbReference>
<dbReference type="PANTHER" id="PTHR12599">
    <property type="entry name" value="PTERIN-4-ALPHA-CARBINOLAMINE DEHYDRATASE"/>
    <property type="match status" value="1"/>
</dbReference>
<dbReference type="PANTHER" id="PTHR12599:SF0">
    <property type="entry name" value="PTERIN-4-ALPHA-CARBINOLAMINE DEHYDRATASE"/>
    <property type="match status" value="1"/>
</dbReference>
<dbReference type="Pfam" id="PF01329">
    <property type="entry name" value="Pterin_4a"/>
    <property type="match status" value="1"/>
</dbReference>
<dbReference type="SUPFAM" id="SSF55248">
    <property type="entry name" value="PCD-like"/>
    <property type="match status" value="1"/>
</dbReference>
<feature type="chain" id="PRO_1000050423" description="Putative pterin-4-alpha-carbinolamine dehydratase">
    <location>
        <begin position="1"/>
        <end position="94"/>
    </location>
</feature>
<gene>
    <name type="ordered locus">Mjls_4273</name>
</gene>
<protein>
    <recommendedName>
        <fullName evidence="1">Putative pterin-4-alpha-carbinolamine dehydratase</fullName>
        <shortName evidence="1">PHS</shortName>
        <ecNumber evidence="1">4.2.1.96</ecNumber>
    </recommendedName>
    <alternativeName>
        <fullName evidence="1">4-alpha-hydroxy-tetrahydropterin dehydratase</fullName>
    </alternativeName>
    <alternativeName>
        <fullName evidence="1">Pterin carbinolamine dehydratase</fullName>
        <shortName evidence="1">PCD</shortName>
    </alternativeName>
</protein>
<keyword id="KW-0456">Lyase</keyword>
<comment type="catalytic activity">
    <reaction evidence="1">
        <text>(4aS,6R)-4a-hydroxy-L-erythro-5,6,7,8-tetrahydrobiopterin = (6R)-L-erythro-6,7-dihydrobiopterin + H2O</text>
        <dbReference type="Rhea" id="RHEA:11920"/>
        <dbReference type="ChEBI" id="CHEBI:15377"/>
        <dbReference type="ChEBI" id="CHEBI:15642"/>
        <dbReference type="ChEBI" id="CHEBI:43120"/>
        <dbReference type="EC" id="4.2.1.96"/>
    </reaction>
</comment>
<comment type="similarity">
    <text evidence="1">Belongs to the pterin-4-alpha-carbinolamine dehydratase family.</text>
</comment>
<proteinExistence type="inferred from homology"/>
<name>PHS_MYCSJ</name>
<organism>
    <name type="scientific">Mycobacterium sp. (strain JLS)</name>
    <dbReference type="NCBI Taxonomy" id="164757"/>
    <lineage>
        <taxon>Bacteria</taxon>
        <taxon>Bacillati</taxon>
        <taxon>Actinomycetota</taxon>
        <taxon>Actinomycetes</taxon>
        <taxon>Mycobacteriales</taxon>
        <taxon>Mycobacteriaceae</taxon>
        <taxon>Mycobacterium</taxon>
    </lineage>
</organism>
<sequence length="94" mass="10637">MAVLTDDQVDAALPELGGWERADGVLRRSVKFPAFLDGIEAVRRVAERAEAKDHHPDIDIRWRTVTFVLVTHSEGGITEKDLQMAREIDEILDR</sequence>
<reference key="1">
    <citation type="submission" date="2007-02" db="EMBL/GenBank/DDBJ databases">
        <title>Complete sequence of Mycobacterium sp. JLS.</title>
        <authorList>
            <consortium name="US DOE Joint Genome Institute"/>
            <person name="Copeland A."/>
            <person name="Lucas S."/>
            <person name="Lapidus A."/>
            <person name="Barry K."/>
            <person name="Detter J.C."/>
            <person name="Glavina del Rio T."/>
            <person name="Hammon N."/>
            <person name="Israni S."/>
            <person name="Dalin E."/>
            <person name="Tice H."/>
            <person name="Pitluck S."/>
            <person name="Chain P."/>
            <person name="Malfatti S."/>
            <person name="Shin M."/>
            <person name="Vergez L."/>
            <person name="Schmutz J."/>
            <person name="Larimer F."/>
            <person name="Land M."/>
            <person name="Hauser L."/>
            <person name="Kyrpides N."/>
            <person name="Mikhailova N."/>
            <person name="Miller C.D."/>
            <person name="Anderson A.J."/>
            <person name="Sims R.C."/>
            <person name="Richardson P."/>
        </authorList>
    </citation>
    <scope>NUCLEOTIDE SEQUENCE [LARGE SCALE GENOMIC DNA]</scope>
    <source>
        <strain>JLS</strain>
    </source>
</reference>
<accession>A3Q4G7</accession>
<evidence type="ECO:0000255" key="1">
    <source>
        <dbReference type="HAMAP-Rule" id="MF_00434"/>
    </source>
</evidence>